<organism>
    <name type="scientific">Trichodesmium erythraeum (strain IMS101)</name>
    <dbReference type="NCBI Taxonomy" id="203124"/>
    <lineage>
        <taxon>Bacteria</taxon>
        <taxon>Bacillati</taxon>
        <taxon>Cyanobacteriota</taxon>
        <taxon>Cyanophyceae</taxon>
        <taxon>Oscillatoriophycideae</taxon>
        <taxon>Oscillatoriales</taxon>
        <taxon>Microcoleaceae</taxon>
        <taxon>Trichodesmium</taxon>
    </lineage>
</organism>
<name>RL24_TRIEI</name>
<accession>Q110B8</accession>
<dbReference type="EMBL" id="CP000393">
    <property type="protein sequence ID" value="ABG52156.1"/>
    <property type="molecule type" value="Genomic_DNA"/>
</dbReference>
<dbReference type="RefSeq" id="WP_011612511.1">
    <property type="nucleotide sequence ID" value="NC_008312.1"/>
</dbReference>
<dbReference type="SMR" id="Q110B8"/>
<dbReference type="STRING" id="203124.Tery_3001"/>
<dbReference type="KEGG" id="ter:Tery_3001"/>
<dbReference type="eggNOG" id="COG0198">
    <property type="taxonomic scope" value="Bacteria"/>
</dbReference>
<dbReference type="HOGENOM" id="CLU_093315_2_0_3"/>
<dbReference type="OrthoDB" id="9807419at2"/>
<dbReference type="GO" id="GO:1990904">
    <property type="term" value="C:ribonucleoprotein complex"/>
    <property type="evidence" value="ECO:0007669"/>
    <property type="project" value="UniProtKB-KW"/>
</dbReference>
<dbReference type="GO" id="GO:0005840">
    <property type="term" value="C:ribosome"/>
    <property type="evidence" value="ECO:0007669"/>
    <property type="project" value="UniProtKB-KW"/>
</dbReference>
<dbReference type="GO" id="GO:0019843">
    <property type="term" value="F:rRNA binding"/>
    <property type="evidence" value="ECO:0007669"/>
    <property type="project" value="UniProtKB-UniRule"/>
</dbReference>
<dbReference type="GO" id="GO:0003735">
    <property type="term" value="F:structural constituent of ribosome"/>
    <property type="evidence" value="ECO:0007669"/>
    <property type="project" value="InterPro"/>
</dbReference>
<dbReference type="GO" id="GO:0006412">
    <property type="term" value="P:translation"/>
    <property type="evidence" value="ECO:0007669"/>
    <property type="project" value="UniProtKB-UniRule"/>
</dbReference>
<dbReference type="CDD" id="cd06089">
    <property type="entry name" value="KOW_RPL26"/>
    <property type="match status" value="1"/>
</dbReference>
<dbReference type="FunFam" id="2.30.30.30:FF:000004">
    <property type="entry name" value="50S ribosomal protein L24"/>
    <property type="match status" value="1"/>
</dbReference>
<dbReference type="Gene3D" id="2.30.30.30">
    <property type="match status" value="1"/>
</dbReference>
<dbReference type="HAMAP" id="MF_01326_B">
    <property type="entry name" value="Ribosomal_uL24_B"/>
    <property type="match status" value="1"/>
</dbReference>
<dbReference type="InterPro" id="IPR005824">
    <property type="entry name" value="KOW"/>
</dbReference>
<dbReference type="InterPro" id="IPR014722">
    <property type="entry name" value="Rib_uL2_dom2"/>
</dbReference>
<dbReference type="InterPro" id="IPR003256">
    <property type="entry name" value="Ribosomal_uL24"/>
</dbReference>
<dbReference type="InterPro" id="IPR005825">
    <property type="entry name" value="Ribosomal_uL24_CS"/>
</dbReference>
<dbReference type="InterPro" id="IPR041988">
    <property type="entry name" value="Ribosomal_uL24_KOW"/>
</dbReference>
<dbReference type="InterPro" id="IPR008991">
    <property type="entry name" value="Translation_prot_SH3-like_sf"/>
</dbReference>
<dbReference type="NCBIfam" id="TIGR01079">
    <property type="entry name" value="rplX_bact"/>
    <property type="match status" value="1"/>
</dbReference>
<dbReference type="PANTHER" id="PTHR12903">
    <property type="entry name" value="MITOCHONDRIAL RIBOSOMAL PROTEIN L24"/>
    <property type="match status" value="1"/>
</dbReference>
<dbReference type="Pfam" id="PF00467">
    <property type="entry name" value="KOW"/>
    <property type="match status" value="1"/>
</dbReference>
<dbReference type="Pfam" id="PF17136">
    <property type="entry name" value="ribosomal_L24"/>
    <property type="match status" value="1"/>
</dbReference>
<dbReference type="SMART" id="SM00739">
    <property type="entry name" value="KOW"/>
    <property type="match status" value="1"/>
</dbReference>
<dbReference type="SUPFAM" id="SSF50104">
    <property type="entry name" value="Translation proteins SH3-like domain"/>
    <property type="match status" value="1"/>
</dbReference>
<dbReference type="PROSITE" id="PS01108">
    <property type="entry name" value="RIBOSOMAL_L24"/>
    <property type="match status" value="1"/>
</dbReference>
<proteinExistence type="inferred from homology"/>
<keyword id="KW-0687">Ribonucleoprotein</keyword>
<keyword id="KW-0689">Ribosomal protein</keyword>
<keyword id="KW-0694">RNA-binding</keyword>
<keyword id="KW-0699">rRNA-binding</keyword>
<feature type="chain" id="PRO_0000355728" description="Large ribosomal subunit protein uL24">
    <location>
        <begin position="1"/>
        <end position="122"/>
    </location>
</feature>
<reference key="1">
    <citation type="journal article" date="2015" name="Proc. Natl. Acad. Sci. U.S.A.">
        <title>Trichodesmium genome maintains abundant, widespread noncoding DNA in situ, despite oligotrophic lifestyle.</title>
        <authorList>
            <person name="Walworth N."/>
            <person name="Pfreundt U."/>
            <person name="Nelson W.C."/>
            <person name="Mincer T."/>
            <person name="Heidelberg J.F."/>
            <person name="Fu F."/>
            <person name="Waterbury J.B."/>
            <person name="Glavina del Rio T."/>
            <person name="Goodwin L."/>
            <person name="Kyrpides N.C."/>
            <person name="Land M.L."/>
            <person name="Woyke T."/>
            <person name="Hutchins D.A."/>
            <person name="Hess W.R."/>
            <person name="Webb E.A."/>
        </authorList>
    </citation>
    <scope>NUCLEOTIDE SEQUENCE [LARGE SCALE GENOMIC DNA]</scope>
    <source>
        <strain>IMS101</strain>
    </source>
</reference>
<protein>
    <recommendedName>
        <fullName evidence="1">Large ribosomal subunit protein uL24</fullName>
    </recommendedName>
    <alternativeName>
        <fullName evidence="2">50S ribosomal protein L24</fullName>
    </alternativeName>
</protein>
<sequence>MSRKKKPLMSARGKPIRYKVHVKKGDTVQIIAGKDKGKVGEVLKVLPKVSKVIVKDVNIITKHVKPQQEGESGKIVTTEAPIHSSNVMLYSTKQKVASRICYTFTDDGRKVRMLKKTGEVID</sequence>
<evidence type="ECO:0000255" key="1">
    <source>
        <dbReference type="HAMAP-Rule" id="MF_01326"/>
    </source>
</evidence>
<evidence type="ECO:0000305" key="2"/>
<gene>
    <name evidence="1" type="primary">rplX</name>
    <name evidence="1" type="synonym">rpl24</name>
    <name type="ordered locus">Tery_3001</name>
</gene>
<comment type="function">
    <text evidence="1">One of two assembly initiator proteins, it binds directly to the 5'-end of the 23S rRNA, where it nucleates assembly of the 50S subunit.</text>
</comment>
<comment type="function">
    <text evidence="1">One of the proteins that surrounds the polypeptide exit tunnel on the outside of the subunit.</text>
</comment>
<comment type="subunit">
    <text evidence="1">Part of the 50S ribosomal subunit.</text>
</comment>
<comment type="similarity">
    <text evidence="1">Belongs to the universal ribosomal protein uL24 family.</text>
</comment>